<organism>
    <name type="scientific">Citrobacter koseri (strain ATCC BAA-895 / CDC 4225-83 / SGSC4696)</name>
    <dbReference type="NCBI Taxonomy" id="290338"/>
    <lineage>
        <taxon>Bacteria</taxon>
        <taxon>Pseudomonadati</taxon>
        <taxon>Pseudomonadota</taxon>
        <taxon>Gammaproteobacteria</taxon>
        <taxon>Enterobacterales</taxon>
        <taxon>Enterobacteriaceae</taxon>
        <taxon>Citrobacter</taxon>
    </lineage>
</organism>
<dbReference type="EC" id="6.3.2.2" evidence="1"/>
<dbReference type="EMBL" id="CP000822">
    <property type="protein sequence ID" value="ABV13694.1"/>
    <property type="molecule type" value="Genomic_DNA"/>
</dbReference>
<dbReference type="RefSeq" id="WP_012133413.1">
    <property type="nucleotide sequence ID" value="NC_009792.1"/>
</dbReference>
<dbReference type="SMR" id="A8AJN1"/>
<dbReference type="STRING" id="290338.CKO_02585"/>
<dbReference type="GeneID" id="45136455"/>
<dbReference type="KEGG" id="cko:CKO_02585"/>
<dbReference type="HOGENOM" id="CLU_044848_1_1_6"/>
<dbReference type="OrthoDB" id="9769628at2"/>
<dbReference type="Proteomes" id="UP000008148">
    <property type="component" value="Chromosome"/>
</dbReference>
<dbReference type="GO" id="GO:0005524">
    <property type="term" value="F:ATP binding"/>
    <property type="evidence" value="ECO:0007669"/>
    <property type="project" value="UniProtKB-KW"/>
</dbReference>
<dbReference type="GO" id="GO:0004357">
    <property type="term" value="F:glutamate-cysteine ligase activity"/>
    <property type="evidence" value="ECO:0007669"/>
    <property type="project" value="UniProtKB-EC"/>
</dbReference>
<dbReference type="GO" id="GO:0042398">
    <property type="term" value="P:modified amino acid biosynthetic process"/>
    <property type="evidence" value="ECO:0007669"/>
    <property type="project" value="InterPro"/>
</dbReference>
<dbReference type="Gene3D" id="3.30.590.20">
    <property type="match status" value="1"/>
</dbReference>
<dbReference type="HAMAP" id="MF_01609">
    <property type="entry name" value="Glu_cys_ligase_2"/>
    <property type="match status" value="1"/>
</dbReference>
<dbReference type="InterPro" id="IPR050141">
    <property type="entry name" value="GCL_type2/YbdK_subfam"/>
</dbReference>
<dbReference type="InterPro" id="IPR006336">
    <property type="entry name" value="GCS2"/>
</dbReference>
<dbReference type="InterPro" id="IPR014746">
    <property type="entry name" value="Gln_synth/guanido_kin_cat_dom"/>
</dbReference>
<dbReference type="InterPro" id="IPR011793">
    <property type="entry name" value="YbdK"/>
</dbReference>
<dbReference type="NCBIfam" id="TIGR02050">
    <property type="entry name" value="gshA_cyan_rel"/>
    <property type="match status" value="1"/>
</dbReference>
<dbReference type="NCBIfam" id="NF010040">
    <property type="entry name" value="PRK13516.1"/>
    <property type="match status" value="1"/>
</dbReference>
<dbReference type="PANTHER" id="PTHR36510">
    <property type="entry name" value="GLUTAMATE--CYSTEINE LIGASE 2-RELATED"/>
    <property type="match status" value="1"/>
</dbReference>
<dbReference type="PANTHER" id="PTHR36510:SF1">
    <property type="entry name" value="GLUTAMATE--CYSTEINE LIGASE 2-RELATED"/>
    <property type="match status" value="1"/>
</dbReference>
<dbReference type="Pfam" id="PF04107">
    <property type="entry name" value="GCS2"/>
    <property type="match status" value="1"/>
</dbReference>
<dbReference type="SUPFAM" id="SSF55931">
    <property type="entry name" value="Glutamine synthetase/guanido kinase"/>
    <property type="match status" value="1"/>
</dbReference>
<evidence type="ECO:0000255" key="1">
    <source>
        <dbReference type="HAMAP-Rule" id="MF_01609"/>
    </source>
</evidence>
<reference key="1">
    <citation type="submission" date="2007-08" db="EMBL/GenBank/DDBJ databases">
        <authorList>
            <consortium name="The Citrobacter koseri Genome Sequencing Project"/>
            <person name="McClelland M."/>
            <person name="Sanderson E.K."/>
            <person name="Porwollik S."/>
            <person name="Spieth J."/>
            <person name="Clifton W.S."/>
            <person name="Latreille P."/>
            <person name="Courtney L."/>
            <person name="Wang C."/>
            <person name="Pepin K."/>
            <person name="Bhonagiri V."/>
            <person name="Nash W."/>
            <person name="Johnson M."/>
            <person name="Thiruvilangam P."/>
            <person name="Wilson R."/>
        </authorList>
    </citation>
    <scope>NUCLEOTIDE SEQUENCE [LARGE SCALE GENOMIC DNA]</scope>
    <source>
        <strain>ATCC BAA-895 / CDC 4225-83 / SGSC4696</strain>
    </source>
</reference>
<feature type="chain" id="PRO_1000069432" description="Putative glutamate--cysteine ligase 2">
    <location>
        <begin position="1"/>
        <end position="372"/>
    </location>
</feature>
<keyword id="KW-0067">ATP-binding</keyword>
<keyword id="KW-0436">Ligase</keyword>
<keyword id="KW-0547">Nucleotide-binding</keyword>
<keyword id="KW-1185">Reference proteome</keyword>
<accession>A8AJN1</accession>
<name>GCS2_CITK8</name>
<proteinExistence type="inferred from homology"/>
<gene>
    <name type="ordered locus">CKO_02585</name>
</gene>
<comment type="function">
    <text evidence="1">ATP-dependent carboxylate-amine ligase which exhibits weak glutamate--cysteine ligase activity.</text>
</comment>
<comment type="catalytic activity">
    <reaction evidence="1">
        <text>L-cysteine + L-glutamate + ATP = gamma-L-glutamyl-L-cysteine + ADP + phosphate + H(+)</text>
        <dbReference type="Rhea" id="RHEA:13285"/>
        <dbReference type="ChEBI" id="CHEBI:15378"/>
        <dbReference type="ChEBI" id="CHEBI:29985"/>
        <dbReference type="ChEBI" id="CHEBI:30616"/>
        <dbReference type="ChEBI" id="CHEBI:35235"/>
        <dbReference type="ChEBI" id="CHEBI:43474"/>
        <dbReference type="ChEBI" id="CHEBI:58173"/>
        <dbReference type="ChEBI" id="CHEBI:456216"/>
        <dbReference type="EC" id="6.3.2.2"/>
    </reaction>
</comment>
<comment type="subunit">
    <text evidence="1">Homodimer.</text>
</comment>
<comment type="similarity">
    <text evidence="1">Belongs to the glutamate--cysteine ligase type 2 family. YbdK subfamily.</text>
</comment>
<sequence length="372" mass="41526">MPLPDFHVSEPFTLGIELEMQVVNPPGYDLSQDSSPLIDAVKSQLTAGEVKHDITESMLEMATGVCRNIDQAAAQFSAMQQVILQAAADHHLEICGGGTHPFQKWQRQEVCDNARYQRTLENFGYLIQQATVFGQHVHIGCANGDDAIYLLHGLSRFVPHFIALAAASPYMQGSDTRFSSARLNIFSSFPDNGPMPWASNWQECEGLFRRLTYTSMIDSIKDLHWDIRPSPHFGTVEVRVMDTPLTLAHAVNIAGLIQATAHWLLTERPFRHQERDYLLYKFNRFQACRYGLEGTLTDVHTGNHHLLSDDTLRLLENVASSADNVGAASAINALRLQVKNGLNEARQMREFVTDGGSLIGLVKKHCEIWAGQ</sequence>
<protein>
    <recommendedName>
        <fullName evidence="1">Putative glutamate--cysteine ligase 2</fullName>
        <ecNumber evidence="1">6.3.2.2</ecNumber>
    </recommendedName>
    <alternativeName>
        <fullName evidence="1">Gamma-glutamylcysteine synthetase 2</fullName>
        <shortName evidence="1">GCS 2</shortName>
        <shortName evidence="1">Gamma-GCS 2</shortName>
    </alternativeName>
</protein>